<sequence length="65" mass="7582">MPKIKTLRSAAKRFKKTASGKFKRKQANLRHILTKKTTTKKRHLRPKILVSKGDISKVKSFLPYF</sequence>
<gene>
    <name evidence="1" type="primary">rpmI</name>
    <name type="ordered locus">BUsg_119</name>
</gene>
<keyword id="KW-0687">Ribonucleoprotein</keyword>
<keyword id="KW-0689">Ribosomal protein</keyword>
<dbReference type="EMBL" id="U11066">
    <property type="protein sequence ID" value="AAC43607.1"/>
    <property type="molecule type" value="Genomic_DNA"/>
</dbReference>
<dbReference type="EMBL" id="AE013218">
    <property type="protein sequence ID" value="AAM67687.1"/>
    <property type="molecule type" value="Genomic_DNA"/>
</dbReference>
<dbReference type="PIR" id="I40073">
    <property type="entry name" value="I40073"/>
</dbReference>
<dbReference type="RefSeq" id="WP_011053654.1">
    <property type="nucleotide sequence ID" value="NC_004061.1"/>
</dbReference>
<dbReference type="SMR" id="P49240"/>
<dbReference type="STRING" id="198804.BUsg_119"/>
<dbReference type="GeneID" id="93003589"/>
<dbReference type="KEGG" id="bas:BUsg_119"/>
<dbReference type="eggNOG" id="COG0291">
    <property type="taxonomic scope" value="Bacteria"/>
</dbReference>
<dbReference type="HOGENOM" id="CLU_169643_1_1_6"/>
<dbReference type="Proteomes" id="UP000000416">
    <property type="component" value="Chromosome"/>
</dbReference>
<dbReference type="GO" id="GO:0022625">
    <property type="term" value="C:cytosolic large ribosomal subunit"/>
    <property type="evidence" value="ECO:0007669"/>
    <property type="project" value="TreeGrafter"/>
</dbReference>
<dbReference type="GO" id="GO:0003735">
    <property type="term" value="F:structural constituent of ribosome"/>
    <property type="evidence" value="ECO:0007669"/>
    <property type="project" value="InterPro"/>
</dbReference>
<dbReference type="GO" id="GO:0006412">
    <property type="term" value="P:translation"/>
    <property type="evidence" value="ECO:0007669"/>
    <property type="project" value="UniProtKB-UniRule"/>
</dbReference>
<dbReference type="FunFam" id="4.10.410.60:FF:000001">
    <property type="entry name" value="50S ribosomal protein L35"/>
    <property type="match status" value="1"/>
</dbReference>
<dbReference type="Gene3D" id="4.10.410.60">
    <property type="match status" value="1"/>
</dbReference>
<dbReference type="HAMAP" id="MF_00514">
    <property type="entry name" value="Ribosomal_bL35"/>
    <property type="match status" value="1"/>
</dbReference>
<dbReference type="InterPro" id="IPR001706">
    <property type="entry name" value="Ribosomal_bL35"/>
</dbReference>
<dbReference type="InterPro" id="IPR021137">
    <property type="entry name" value="Ribosomal_bL35-like"/>
</dbReference>
<dbReference type="InterPro" id="IPR018265">
    <property type="entry name" value="Ribosomal_bL35_CS"/>
</dbReference>
<dbReference type="InterPro" id="IPR037229">
    <property type="entry name" value="Ribosomal_bL35_sf"/>
</dbReference>
<dbReference type="NCBIfam" id="TIGR00001">
    <property type="entry name" value="rpmI_bact"/>
    <property type="match status" value="1"/>
</dbReference>
<dbReference type="PANTHER" id="PTHR33343">
    <property type="entry name" value="54S RIBOSOMAL PROTEIN BL35M"/>
    <property type="match status" value="1"/>
</dbReference>
<dbReference type="PANTHER" id="PTHR33343:SF1">
    <property type="entry name" value="LARGE RIBOSOMAL SUBUNIT PROTEIN BL35M"/>
    <property type="match status" value="1"/>
</dbReference>
<dbReference type="Pfam" id="PF01632">
    <property type="entry name" value="Ribosomal_L35p"/>
    <property type="match status" value="1"/>
</dbReference>
<dbReference type="PRINTS" id="PR00064">
    <property type="entry name" value="RIBOSOMALL35"/>
</dbReference>
<dbReference type="SUPFAM" id="SSF143034">
    <property type="entry name" value="L35p-like"/>
    <property type="match status" value="1"/>
</dbReference>
<dbReference type="PROSITE" id="PS00936">
    <property type="entry name" value="RIBOSOMAL_L35"/>
    <property type="match status" value="1"/>
</dbReference>
<evidence type="ECO:0000255" key="1">
    <source>
        <dbReference type="HAMAP-Rule" id="MF_00514"/>
    </source>
</evidence>
<evidence type="ECO:0000256" key="2">
    <source>
        <dbReference type="SAM" id="MobiDB-lite"/>
    </source>
</evidence>
<evidence type="ECO:0000305" key="3"/>
<comment type="similarity">
    <text evidence="1">Belongs to the bacterial ribosomal protein bL35 family.</text>
</comment>
<proteinExistence type="inferred from homology"/>
<feature type="chain" id="PRO_0000177340" description="Large ribosomal subunit protein bL35">
    <location>
        <begin position="1"/>
        <end position="65"/>
    </location>
</feature>
<feature type="region of interest" description="Disordered" evidence="2">
    <location>
        <begin position="1"/>
        <end position="22"/>
    </location>
</feature>
<feature type="compositionally biased region" description="Basic residues" evidence="2">
    <location>
        <begin position="10"/>
        <end position="22"/>
    </location>
</feature>
<reference key="1">
    <citation type="journal article" date="1995" name="Curr. Microbiol.">
        <title>Aromatic amino acid biosynthesis in Buchnera aphidicola (endosymbiont of aphids): cloning and sequencing of a DNA fragment containing aroH-thrS-infC-rpmI-rplT.</title>
        <authorList>
            <person name="Kolibachuk D."/>
            <person name="Rouhbakhsh D."/>
            <person name="Baumann P."/>
        </authorList>
    </citation>
    <scope>NUCLEOTIDE SEQUENCE [GENOMIC DNA]</scope>
</reference>
<reference key="2">
    <citation type="journal article" date="2002" name="Science">
        <title>50 million years of genomic stasis in endosymbiotic bacteria.</title>
        <authorList>
            <person name="Tamas I."/>
            <person name="Klasson L."/>
            <person name="Canbaeck B."/>
            <person name="Naeslund A.K."/>
            <person name="Eriksson A.-S."/>
            <person name="Wernegreen J.J."/>
            <person name="Sandstroem J.P."/>
            <person name="Moran N.A."/>
            <person name="Andersson S.G.E."/>
        </authorList>
    </citation>
    <scope>NUCLEOTIDE SEQUENCE [LARGE SCALE GENOMIC DNA]</scope>
    <source>
        <strain>Sg</strain>
    </source>
</reference>
<organism>
    <name type="scientific">Buchnera aphidicola subsp. Schizaphis graminum (strain Sg)</name>
    <dbReference type="NCBI Taxonomy" id="198804"/>
    <lineage>
        <taxon>Bacteria</taxon>
        <taxon>Pseudomonadati</taxon>
        <taxon>Pseudomonadota</taxon>
        <taxon>Gammaproteobacteria</taxon>
        <taxon>Enterobacterales</taxon>
        <taxon>Erwiniaceae</taxon>
        <taxon>Buchnera</taxon>
    </lineage>
</organism>
<accession>P49240</accession>
<protein>
    <recommendedName>
        <fullName evidence="1">Large ribosomal subunit protein bL35</fullName>
    </recommendedName>
    <alternativeName>
        <fullName evidence="3">50S ribosomal protein L35</fullName>
    </alternativeName>
</protein>
<name>RL35_BUCAP</name>